<organism>
    <name type="scientific">Mus musculus</name>
    <name type="common">Mouse</name>
    <dbReference type="NCBI Taxonomy" id="10090"/>
    <lineage>
        <taxon>Eukaryota</taxon>
        <taxon>Metazoa</taxon>
        <taxon>Chordata</taxon>
        <taxon>Craniata</taxon>
        <taxon>Vertebrata</taxon>
        <taxon>Euteleostomi</taxon>
        <taxon>Mammalia</taxon>
        <taxon>Eutheria</taxon>
        <taxon>Euarchontoglires</taxon>
        <taxon>Glires</taxon>
        <taxon>Rodentia</taxon>
        <taxon>Myomorpha</taxon>
        <taxon>Muroidea</taxon>
        <taxon>Muridae</taxon>
        <taxon>Murinae</taxon>
        <taxon>Mus</taxon>
        <taxon>Mus</taxon>
    </lineage>
</organism>
<accession>P47939</accession>
<gene>
    <name type="primary">Resp18</name>
</gene>
<feature type="signal peptide" evidence="2">
    <location>
        <begin position="1"/>
        <end position="29"/>
    </location>
</feature>
<feature type="chain" id="PRO_0000022219" description="Regulated endocrine-specific protein 18">
    <location>
        <begin position="30"/>
        <end position="175"/>
    </location>
</feature>
<keyword id="KW-0968">Cytoplasmic vesicle</keyword>
<keyword id="KW-0256">Endoplasmic reticulum</keyword>
<keyword id="KW-0333">Golgi apparatus</keyword>
<keyword id="KW-1185">Reference proteome</keyword>
<keyword id="KW-0732">Signal</keyword>
<sequence>MQSSLKPAGSGHLQLLVCFLLLYSRPGSCSDINAHDGQGQVGSEQLWTFQGLIASVFQYLQLIFHQIVPEGMFWADDIAYELMTKKVEHLSRLHPQYPCRKDMKAVSPTANAGVRSKQEEKLQLLSPQKSPTVKVNRDRCFTTKVIPKATKQEATHPTKGFFGPFPTVGLNLVAD</sequence>
<dbReference type="EMBL" id="L34214">
    <property type="protein sequence ID" value="AAA67425.1"/>
    <property type="molecule type" value="mRNA"/>
</dbReference>
<dbReference type="EMBL" id="AK019440">
    <property type="protein sequence ID" value="BAB31720.1"/>
    <property type="molecule type" value="mRNA"/>
</dbReference>
<dbReference type="EMBL" id="BC027535">
    <property type="protein sequence ID" value="AAH27535.1"/>
    <property type="molecule type" value="mRNA"/>
</dbReference>
<dbReference type="CCDS" id="CCDS15069.1"/>
<dbReference type="PIR" id="I53285">
    <property type="entry name" value="I53285"/>
</dbReference>
<dbReference type="RefSeq" id="NP_033075.1">
    <property type="nucleotide sequence ID" value="NM_009049.2"/>
</dbReference>
<dbReference type="FunCoup" id="P47939">
    <property type="interactions" value="2"/>
</dbReference>
<dbReference type="STRING" id="10090.ENSMUSP00000043783"/>
<dbReference type="GlyGen" id="P47939">
    <property type="glycosylation" value="1 site"/>
</dbReference>
<dbReference type="PhosphoSitePlus" id="P47939"/>
<dbReference type="PaxDb" id="10090-ENSMUSP00000043783"/>
<dbReference type="ProteomicsDB" id="255228"/>
<dbReference type="Antibodypedia" id="52248">
    <property type="antibodies" value="7 antibodies from 6 providers"/>
</dbReference>
<dbReference type="DNASU" id="19711"/>
<dbReference type="Ensembl" id="ENSMUST00000039534.11">
    <property type="protein sequence ID" value="ENSMUSP00000043783.5"/>
    <property type="gene ID" value="ENSMUSG00000033061.16"/>
</dbReference>
<dbReference type="GeneID" id="19711"/>
<dbReference type="KEGG" id="mmu:19711"/>
<dbReference type="UCSC" id="uc007bos.1">
    <property type="organism name" value="mouse"/>
</dbReference>
<dbReference type="AGR" id="MGI:1098222"/>
<dbReference type="CTD" id="389075"/>
<dbReference type="MGI" id="MGI:1098222">
    <property type="gene designation" value="Resp18"/>
</dbReference>
<dbReference type="VEuPathDB" id="HostDB:ENSMUSG00000033061"/>
<dbReference type="eggNOG" id="KOG0793">
    <property type="taxonomic scope" value="Eukaryota"/>
</dbReference>
<dbReference type="GeneTree" id="ENSGT00390000008124"/>
<dbReference type="HOGENOM" id="CLU_106769_1_0_1"/>
<dbReference type="InParanoid" id="P47939"/>
<dbReference type="OMA" id="GRIQHPL"/>
<dbReference type="OrthoDB" id="9837799at2759"/>
<dbReference type="PhylomeDB" id="P47939"/>
<dbReference type="TreeFam" id="TF338242"/>
<dbReference type="BioGRID-ORCS" id="19711">
    <property type="hits" value="4 hits in 76 CRISPR screens"/>
</dbReference>
<dbReference type="PRO" id="PR:P47939"/>
<dbReference type="Proteomes" id="UP000000589">
    <property type="component" value="Chromosome 1"/>
</dbReference>
<dbReference type="RNAct" id="P47939">
    <property type="molecule type" value="protein"/>
</dbReference>
<dbReference type="Bgee" id="ENSMUSG00000033061">
    <property type="expression patterns" value="Expressed in median eminence of neurohypophysis and 108 other cell types or tissues"/>
</dbReference>
<dbReference type="ExpressionAtlas" id="P47939">
    <property type="expression patterns" value="baseline and differential"/>
</dbReference>
<dbReference type="GO" id="GO:0031410">
    <property type="term" value="C:cytoplasmic vesicle"/>
    <property type="evidence" value="ECO:0007669"/>
    <property type="project" value="UniProtKB-KW"/>
</dbReference>
<dbReference type="GO" id="GO:0005783">
    <property type="term" value="C:endoplasmic reticulum"/>
    <property type="evidence" value="ECO:0000314"/>
    <property type="project" value="MGI"/>
</dbReference>
<dbReference type="GO" id="GO:0005794">
    <property type="term" value="C:Golgi apparatus"/>
    <property type="evidence" value="ECO:0007669"/>
    <property type="project" value="UniProtKB-SubCell"/>
</dbReference>
<dbReference type="GO" id="GO:0001701">
    <property type="term" value="P:in utero embryonic development"/>
    <property type="evidence" value="ECO:0000315"/>
    <property type="project" value="MGI"/>
</dbReference>
<dbReference type="InterPro" id="IPR024833">
    <property type="entry name" value="RESP18"/>
</dbReference>
<dbReference type="InterPro" id="IPR029403">
    <property type="entry name" value="RESP18_dom"/>
</dbReference>
<dbReference type="PANTHER" id="PTHR17314">
    <property type="entry name" value="REGULATED ENDOCRINE SPECIFIC PROTEIN 18"/>
    <property type="match status" value="1"/>
</dbReference>
<dbReference type="PANTHER" id="PTHR17314:SF0">
    <property type="entry name" value="REGULATED ENDOCRINE-SPECIFIC PROTEIN 18"/>
    <property type="match status" value="1"/>
</dbReference>
<dbReference type="Pfam" id="PF14948">
    <property type="entry name" value="RESP18"/>
    <property type="match status" value="1"/>
</dbReference>
<dbReference type="SMART" id="SM01305">
    <property type="entry name" value="RESP18"/>
    <property type="match status" value="1"/>
</dbReference>
<reference key="1">
    <citation type="journal article" date="1994" name="Endocrinology">
        <title>Regulated endocrine-specific protein-18: a short-lived novel glucocorticoid-regulated endocrine protein.</title>
        <authorList>
            <person name="Bloomquist B.T."/>
            <person name="Darlington D.N."/>
            <person name="Mueller G.P."/>
            <person name="Mains R.E."/>
            <person name="Eipper B.A."/>
        </authorList>
    </citation>
    <scope>NUCLEOTIDE SEQUENCE [MRNA]</scope>
    <scope>SUBCELLULAR LOCATION</scope>
    <source>
        <tissue>Pituitary anterior lobe</tissue>
    </source>
</reference>
<reference key="2">
    <citation type="journal article" date="2005" name="Science">
        <title>The transcriptional landscape of the mammalian genome.</title>
        <authorList>
            <person name="Carninci P."/>
            <person name="Kasukawa T."/>
            <person name="Katayama S."/>
            <person name="Gough J."/>
            <person name="Frith M.C."/>
            <person name="Maeda N."/>
            <person name="Oyama R."/>
            <person name="Ravasi T."/>
            <person name="Lenhard B."/>
            <person name="Wells C."/>
            <person name="Kodzius R."/>
            <person name="Shimokawa K."/>
            <person name="Bajic V.B."/>
            <person name="Brenner S.E."/>
            <person name="Batalov S."/>
            <person name="Forrest A.R."/>
            <person name="Zavolan M."/>
            <person name="Davis M.J."/>
            <person name="Wilming L.G."/>
            <person name="Aidinis V."/>
            <person name="Allen J.E."/>
            <person name="Ambesi-Impiombato A."/>
            <person name="Apweiler R."/>
            <person name="Aturaliya R.N."/>
            <person name="Bailey T.L."/>
            <person name="Bansal M."/>
            <person name="Baxter L."/>
            <person name="Beisel K.W."/>
            <person name="Bersano T."/>
            <person name="Bono H."/>
            <person name="Chalk A.M."/>
            <person name="Chiu K.P."/>
            <person name="Choudhary V."/>
            <person name="Christoffels A."/>
            <person name="Clutterbuck D.R."/>
            <person name="Crowe M.L."/>
            <person name="Dalla E."/>
            <person name="Dalrymple B.P."/>
            <person name="de Bono B."/>
            <person name="Della Gatta G."/>
            <person name="di Bernardo D."/>
            <person name="Down T."/>
            <person name="Engstrom P."/>
            <person name="Fagiolini M."/>
            <person name="Faulkner G."/>
            <person name="Fletcher C.F."/>
            <person name="Fukushima T."/>
            <person name="Furuno M."/>
            <person name="Futaki S."/>
            <person name="Gariboldi M."/>
            <person name="Georgii-Hemming P."/>
            <person name="Gingeras T.R."/>
            <person name="Gojobori T."/>
            <person name="Green R.E."/>
            <person name="Gustincich S."/>
            <person name="Harbers M."/>
            <person name="Hayashi Y."/>
            <person name="Hensch T.K."/>
            <person name="Hirokawa N."/>
            <person name="Hill D."/>
            <person name="Huminiecki L."/>
            <person name="Iacono M."/>
            <person name="Ikeo K."/>
            <person name="Iwama A."/>
            <person name="Ishikawa T."/>
            <person name="Jakt M."/>
            <person name="Kanapin A."/>
            <person name="Katoh M."/>
            <person name="Kawasawa Y."/>
            <person name="Kelso J."/>
            <person name="Kitamura H."/>
            <person name="Kitano H."/>
            <person name="Kollias G."/>
            <person name="Krishnan S.P."/>
            <person name="Kruger A."/>
            <person name="Kummerfeld S.K."/>
            <person name="Kurochkin I.V."/>
            <person name="Lareau L.F."/>
            <person name="Lazarevic D."/>
            <person name="Lipovich L."/>
            <person name="Liu J."/>
            <person name="Liuni S."/>
            <person name="McWilliam S."/>
            <person name="Madan Babu M."/>
            <person name="Madera M."/>
            <person name="Marchionni L."/>
            <person name="Matsuda H."/>
            <person name="Matsuzawa S."/>
            <person name="Miki H."/>
            <person name="Mignone F."/>
            <person name="Miyake S."/>
            <person name="Morris K."/>
            <person name="Mottagui-Tabar S."/>
            <person name="Mulder N."/>
            <person name="Nakano N."/>
            <person name="Nakauchi H."/>
            <person name="Ng P."/>
            <person name="Nilsson R."/>
            <person name="Nishiguchi S."/>
            <person name="Nishikawa S."/>
            <person name="Nori F."/>
            <person name="Ohara O."/>
            <person name="Okazaki Y."/>
            <person name="Orlando V."/>
            <person name="Pang K.C."/>
            <person name="Pavan W.J."/>
            <person name="Pavesi G."/>
            <person name="Pesole G."/>
            <person name="Petrovsky N."/>
            <person name="Piazza S."/>
            <person name="Reed J."/>
            <person name="Reid J.F."/>
            <person name="Ring B.Z."/>
            <person name="Ringwald M."/>
            <person name="Rost B."/>
            <person name="Ruan Y."/>
            <person name="Salzberg S.L."/>
            <person name="Sandelin A."/>
            <person name="Schneider C."/>
            <person name="Schoenbach C."/>
            <person name="Sekiguchi K."/>
            <person name="Semple C.A."/>
            <person name="Seno S."/>
            <person name="Sessa L."/>
            <person name="Sheng Y."/>
            <person name="Shibata Y."/>
            <person name="Shimada H."/>
            <person name="Shimada K."/>
            <person name="Silva D."/>
            <person name="Sinclair B."/>
            <person name="Sperling S."/>
            <person name="Stupka E."/>
            <person name="Sugiura K."/>
            <person name="Sultana R."/>
            <person name="Takenaka Y."/>
            <person name="Taki K."/>
            <person name="Tammoja K."/>
            <person name="Tan S.L."/>
            <person name="Tang S."/>
            <person name="Taylor M.S."/>
            <person name="Tegner J."/>
            <person name="Teichmann S.A."/>
            <person name="Ueda H.R."/>
            <person name="van Nimwegen E."/>
            <person name="Verardo R."/>
            <person name="Wei C.L."/>
            <person name="Yagi K."/>
            <person name="Yamanishi H."/>
            <person name="Zabarovsky E."/>
            <person name="Zhu S."/>
            <person name="Zimmer A."/>
            <person name="Hide W."/>
            <person name="Bult C."/>
            <person name="Grimmond S.M."/>
            <person name="Teasdale R.D."/>
            <person name="Liu E.T."/>
            <person name="Brusic V."/>
            <person name="Quackenbush J."/>
            <person name="Wahlestedt C."/>
            <person name="Mattick J.S."/>
            <person name="Hume D.A."/>
            <person name="Kai C."/>
            <person name="Sasaki D."/>
            <person name="Tomaru Y."/>
            <person name="Fukuda S."/>
            <person name="Kanamori-Katayama M."/>
            <person name="Suzuki M."/>
            <person name="Aoki J."/>
            <person name="Arakawa T."/>
            <person name="Iida J."/>
            <person name="Imamura K."/>
            <person name="Itoh M."/>
            <person name="Kato T."/>
            <person name="Kawaji H."/>
            <person name="Kawagashira N."/>
            <person name="Kawashima T."/>
            <person name="Kojima M."/>
            <person name="Kondo S."/>
            <person name="Konno H."/>
            <person name="Nakano K."/>
            <person name="Ninomiya N."/>
            <person name="Nishio T."/>
            <person name="Okada M."/>
            <person name="Plessy C."/>
            <person name="Shibata K."/>
            <person name="Shiraki T."/>
            <person name="Suzuki S."/>
            <person name="Tagami M."/>
            <person name="Waki K."/>
            <person name="Watahiki A."/>
            <person name="Okamura-Oho Y."/>
            <person name="Suzuki H."/>
            <person name="Kawai J."/>
            <person name="Hayashizaki Y."/>
        </authorList>
    </citation>
    <scope>NUCLEOTIDE SEQUENCE [LARGE SCALE MRNA]</scope>
    <source>
        <strain>C57BL/6J</strain>
        <tissue>Head</tissue>
    </source>
</reference>
<reference key="3">
    <citation type="journal article" date="2004" name="Genome Res.">
        <title>The status, quality, and expansion of the NIH full-length cDNA project: the Mammalian Gene Collection (MGC).</title>
        <authorList>
            <consortium name="The MGC Project Team"/>
        </authorList>
    </citation>
    <scope>NUCLEOTIDE SEQUENCE [LARGE SCALE MRNA]</scope>
    <source>
        <strain>C57BL/6J</strain>
        <tissue>Thymus</tissue>
    </source>
</reference>
<reference key="4">
    <citation type="journal article" date="2007" name="J. Endocrinol.">
        <title>RESP18, a homolog of the luminal domain IA-2, is found in dense core vesicles in pancreatic islet cells and is induced by high glucose.</title>
        <authorList>
            <person name="Zhang G."/>
            <person name="Hirai H."/>
            <person name="Cai T."/>
            <person name="Miura J."/>
            <person name="Yu P."/>
            <person name="Huang H."/>
            <person name="Schiller M.R."/>
            <person name="Swaim W.D."/>
            <person name="Leapman R.D."/>
            <person name="Notkins A.L."/>
        </authorList>
    </citation>
    <scope>INDUCTION</scope>
    <scope>TISSUE SPECIFICITY</scope>
</reference>
<proteinExistence type="evidence at transcript level"/>
<protein>
    <recommendedName>
        <fullName>Regulated endocrine-specific protein 18</fullName>
    </recommendedName>
</protein>
<name>RES18_MOUSE</name>
<evidence type="ECO:0000250" key="1">
    <source>
        <dbReference type="UniProtKB" id="P47940"/>
    </source>
</evidence>
<evidence type="ECO:0000255" key="2"/>
<evidence type="ECO:0000269" key="3">
    <source>
    </source>
</evidence>
<evidence type="ECO:0000269" key="4">
    <source>
    </source>
</evidence>
<evidence type="ECO:0000305" key="5"/>
<comment type="function">
    <text>May play an important regulatory role in corticotrophs.</text>
</comment>
<comment type="subcellular location">
    <subcellularLocation>
        <location evidence="4">Endoplasmic reticulum</location>
    </subcellularLocation>
    <subcellularLocation>
        <location evidence="1">Golgi apparatus</location>
    </subcellularLocation>
    <subcellularLocation>
        <location evidence="1">Cytoplasmic vesicle</location>
        <location evidence="1">Secretory vesicle lumen</location>
    </subcellularLocation>
    <text evidence="1 4">Found in the lumen of secretory vesicles (dense core vesicles, DCV) (By similarity). However, seems to be retained intracellularly and not secreted (PubMed:7988462).</text>
</comment>
<comment type="tissue specificity">
    <text evidence="3">Pituitary, hypothalamus and pancreas. Highest levels are found in somatotrophes, mammotrophes, and gonadotrophes, and lower levels are found in corticotrophs and thyrotropes.</text>
</comment>
<comment type="induction">
    <text evidence="3">Up-regulated by high levels of glucose.</text>
</comment>
<comment type="similarity">
    <text evidence="5">Belongs to the RESP18 family.</text>
</comment>